<accession>P03545</accession>
<feature type="chain" id="PRO_0000222062" description="Movement protein">
    <location>
        <begin position="1"/>
        <end position="327"/>
    </location>
</feature>
<feature type="coiled-coil region">
    <location>
        <begin position="297"/>
        <end position="327"/>
    </location>
</feature>
<name>MVP_CAMVS</name>
<sequence length="327" mass="36873">MDLYPEENTQSEQSQNSENNMQIFKSENSDGFSSDLMISNDQLKNISKTQLTLEKEKIFKMPNVLSQVMKKAFSRKNEILYCVSTKELSVDIHDATGKVYLPLITKEEINKRLSSLKPEVRKTMSMVHLGAVKILLKAQFRNGIDTPIKIALIDDRINSRRDCLLGAAKGNLAYGKFMFTVYPKFGISLNTQRLNQTLSLIHDFENKNLMNKGDKVMTITYVVGYALTNSHHSIDYQSNATIELEDVFQEIGNVQQSEFCTIQNDECNWAIDIAQNKALLGAKTKTQIGNNLQIGNSASSSNTENELARVSQNIDLLKNKLKEICGE</sequence>
<reference key="1">
    <citation type="journal article" date="1980" name="Cell">
        <title>Nucleotide sequence of cauliflower mosaic virus DNA.</title>
        <authorList>
            <person name="Franck A."/>
            <person name="Guilley H."/>
            <person name="Jonard G."/>
            <person name="Richards K."/>
            <person name="Hirth L."/>
        </authorList>
    </citation>
    <scope>NUCLEOTIDE SEQUENCE [GENOMIC DNA]</scope>
</reference>
<reference key="2">
    <citation type="journal article" date="2001" name="Plant Mol. Biol.">
        <title>Identification of arabidopsis proteins that interact with the cauliflower mosaic virus (CaMV) movement protein.</title>
        <authorList>
            <person name="Huang Z."/>
            <person name="Andrianov V.M."/>
            <person name="Han Y."/>
            <person name="Howell S.H."/>
        </authorList>
    </citation>
    <scope>INTERACTION WITH HOST PRA1D</scope>
    <source>
        <strain>CM-1841</strain>
    </source>
</reference>
<reference key="3">
    <citation type="journal article" date="2005" name="Proc. Natl. Acad. Sci. U.S.A.">
        <title>A coiled-coil interaction mediates cauliflower mosaic virus cell-to-cell movement.</title>
        <authorList>
            <person name="Stavolone L."/>
            <person name="Villani M.E."/>
            <person name="Leclerc D."/>
            <person name="Hohn T."/>
        </authorList>
    </citation>
    <scope>HOMOTRIMER</scope>
    <scope>INTERACTION WITH VAP</scope>
    <scope>SUBCELLULAR LOCATION</scope>
    <scope>FUNCTION</scope>
</reference>
<gene>
    <name type="ORF">ORF I</name>
</gene>
<comment type="function">
    <text evidence="2">Transports viral genome to neighboring plant cells directly through plasmosdesmata, without any budding. The movement protein allows efficient cell to cell propagation, by bypassing the host cell wall barrier. Acts by forming tubules structures that increase the size exclusion limit (SEL) of plasmodesmata, thereby allowing viral ribonucleocapsids to spread directly to neighboring cells.</text>
</comment>
<comment type="subunit">
    <text evidence="1 2">Homotrimer, through the coiled-coil domain. Interacts with VAP. May interact (via N-terminus) with host prenylated Rab acceptor protein 1D (PRA1D).</text>
</comment>
<comment type="subcellular location">
    <subcellularLocation>
        <location evidence="2">Host cell junction</location>
        <location evidence="2">Host plasmodesma</location>
    </subcellularLocation>
    <text>Assembles in tubules that are embedded within modified plasmodesmata.</text>
</comment>
<comment type="similarity">
    <text evidence="3">Belongs to the caulimoviridae movement protein family.</text>
</comment>
<evidence type="ECO:0000269" key="1">
    <source>
    </source>
</evidence>
<evidence type="ECO:0000269" key="2">
    <source>
    </source>
</evidence>
<evidence type="ECO:0000305" key="3"/>
<dbReference type="EMBL" id="V00141">
    <property type="protein sequence ID" value="CAA23456.1"/>
    <property type="molecule type" value="Genomic_DNA"/>
</dbReference>
<dbReference type="PIR" id="B90799">
    <property type="entry name" value="QQCV1"/>
</dbReference>
<dbReference type="RefSeq" id="NP_056724.1">
    <property type="nucleotide sequence ID" value="NC_001497.1"/>
</dbReference>
<dbReference type="KEGG" id="vg:1489544"/>
<dbReference type="Proteomes" id="UP000002501">
    <property type="component" value="Genome"/>
</dbReference>
<dbReference type="GO" id="GO:0044219">
    <property type="term" value="C:host cell plasmodesma"/>
    <property type="evidence" value="ECO:0007669"/>
    <property type="project" value="UniProtKB-SubCell"/>
</dbReference>
<dbReference type="GO" id="GO:0046740">
    <property type="term" value="P:transport of virus in host, cell to cell"/>
    <property type="evidence" value="ECO:0007669"/>
    <property type="project" value="UniProtKB-KW"/>
</dbReference>
<dbReference type="InterPro" id="IPR051596">
    <property type="entry name" value="Caulimoviridae_Movement"/>
</dbReference>
<dbReference type="InterPro" id="IPR028919">
    <property type="entry name" value="Viral_movement"/>
</dbReference>
<dbReference type="PANTHER" id="PTHR47599">
    <property type="entry name" value="CELL-TO-CELL MOVEMENT PROTEIN"/>
    <property type="match status" value="1"/>
</dbReference>
<dbReference type="PANTHER" id="PTHR47599:SF3">
    <property type="entry name" value="CELL-TO-CELL MOVEMENT PROTEIN"/>
    <property type="match status" value="1"/>
</dbReference>
<dbReference type="Pfam" id="PF01107">
    <property type="entry name" value="MP"/>
    <property type="match status" value="1"/>
</dbReference>
<protein>
    <recommendedName>
        <fullName>Movement protein</fullName>
        <shortName>MP</shortName>
    </recommendedName>
    <alternativeName>
        <fullName>Cell-to-cell transport protein</fullName>
    </alternativeName>
</protein>
<organism>
    <name type="scientific">Cauliflower mosaic virus (strain Strasbourg)</name>
    <name type="common">CaMV</name>
    <dbReference type="NCBI Taxonomy" id="10648"/>
    <lineage>
        <taxon>Viruses</taxon>
        <taxon>Riboviria</taxon>
        <taxon>Pararnavirae</taxon>
        <taxon>Artverviricota</taxon>
        <taxon>Revtraviricetes</taxon>
        <taxon>Ortervirales</taxon>
        <taxon>Caulimoviridae</taxon>
        <taxon>Caulimovirus</taxon>
        <taxon>Caulimovirus tessellobrassicae</taxon>
    </lineage>
</organism>
<proteinExistence type="evidence at protein level"/>
<organismHost>
    <name type="scientific">Arabidopsis thaliana</name>
    <name type="common">Mouse-ear cress</name>
    <dbReference type="NCBI Taxonomy" id="3702"/>
</organismHost>
<organismHost>
    <name type="scientific">Brassica</name>
    <dbReference type="NCBI Taxonomy" id="3705"/>
</organismHost>
<organismHost>
    <name type="scientific">Raphanus</name>
    <dbReference type="NCBI Taxonomy" id="3725"/>
</organismHost>
<keyword id="KW-0175">Coiled coil</keyword>
<keyword id="KW-1031">Host cell junction</keyword>
<keyword id="KW-0945">Host-virus interaction</keyword>
<keyword id="KW-1185">Reference proteome</keyword>
<keyword id="KW-0813">Transport</keyword>
<keyword id="KW-0916">Viral movement protein</keyword>